<dbReference type="EC" id="1.3.5.2"/>
<dbReference type="EMBL" id="X02826">
    <property type="protein sequence ID" value="CAA26594.1"/>
    <property type="molecule type" value="Genomic_DNA"/>
</dbReference>
<dbReference type="EMBL" id="U00096">
    <property type="protein sequence ID" value="AAC74031.1"/>
    <property type="molecule type" value="Genomic_DNA"/>
</dbReference>
<dbReference type="EMBL" id="AP009048">
    <property type="protein sequence ID" value="BAA35700.1"/>
    <property type="molecule type" value="Genomic_DNA"/>
</dbReference>
<dbReference type="PIR" id="A23109">
    <property type="entry name" value="DEECDO"/>
</dbReference>
<dbReference type="RefSeq" id="NP_415465.1">
    <property type="nucleotide sequence ID" value="NC_000913.3"/>
</dbReference>
<dbReference type="RefSeq" id="WP_001295352.1">
    <property type="nucleotide sequence ID" value="NZ_STEB01000006.1"/>
</dbReference>
<dbReference type="PDB" id="1F76">
    <property type="method" value="X-ray"/>
    <property type="resolution" value="2.50 A"/>
    <property type="chains" value="A/B/D/E=1-336"/>
</dbReference>
<dbReference type="PDB" id="7T5K">
    <property type="method" value="X-ray"/>
    <property type="resolution" value="2.25 A"/>
    <property type="chains" value="A/B=1-336"/>
</dbReference>
<dbReference type="PDB" id="7T5Y">
    <property type="method" value="X-ray"/>
    <property type="resolution" value="2.62 A"/>
    <property type="chains" value="A/B=1-336"/>
</dbReference>
<dbReference type="PDB" id="7T6C">
    <property type="method" value="X-ray"/>
    <property type="resolution" value="2.53 A"/>
    <property type="chains" value="A/B=1-336"/>
</dbReference>
<dbReference type="PDB" id="7T6H">
    <property type="method" value="X-ray"/>
    <property type="resolution" value="2.42 A"/>
    <property type="chains" value="A/B=1-336"/>
</dbReference>
<dbReference type="PDBsum" id="1F76"/>
<dbReference type="PDBsum" id="7T5K"/>
<dbReference type="PDBsum" id="7T5Y"/>
<dbReference type="PDBsum" id="7T6C"/>
<dbReference type="PDBsum" id="7T6H"/>
<dbReference type="SMR" id="P0A7E1"/>
<dbReference type="BioGRID" id="4259440">
    <property type="interactions" value="36"/>
</dbReference>
<dbReference type="BioGRID" id="849930">
    <property type="interactions" value="1"/>
</dbReference>
<dbReference type="DIP" id="DIP-35945N"/>
<dbReference type="FunCoup" id="P0A7E1">
    <property type="interactions" value="794"/>
</dbReference>
<dbReference type="IntAct" id="P0A7E1">
    <property type="interactions" value="6"/>
</dbReference>
<dbReference type="STRING" id="511145.b0945"/>
<dbReference type="DrugBank" id="DB03247">
    <property type="generic name" value="Flavin mononucleotide"/>
</dbReference>
<dbReference type="DrugBank" id="DB01942">
    <property type="generic name" value="Formic acid"/>
</dbReference>
<dbReference type="DrugBank" id="DB02262">
    <property type="generic name" value="Orotic acid"/>
</dbReference>
<dbReference type="jPOST" id="P0A7E1"/>
<dbReference type="PaxDb" id="511145-b0945"/>
<dbReference type="EnsemblBacteria" id="AAC74031">
    <property type="protein sequence ID" value="AAC74031"/>
    <property type="gene ID" value="b0945"/>
</dbReference>
<dbReference type="GeneID" id="93776469"/>
<dbReference type="GeneID" id="945556"/>
<dbReference type="KEGG" id="ecj:JW0928"/>
<dbReference type="KEGG" id="eco:b0945"/>
<dbReference type="KEGG" id="ecoc:C3026_05790"/>
<dbReference type="PATRIC" id="fig|1411691.4.peg.1329"/>
<dbReference type="EchoBASE" id="EB0800"/>
<dbReference type="eggNOG" id="COG0167">
    <property type="taxonomic scope" value="Bacteria"/>
</dbReference>
<dbReference type="HOGENOM" id="CLU_013640_2_0_6"/>
<dbReference type="InParanoid" id="P0A7E1"/>
<dbReference type="OMA" id="ERIKMGA"/>
<dbReference type="OrthoDB" id="9802377at2"/>
<dbReference type="PhylomeDB" id="P0A7E1"/>
<dbReference type="BioCyc" id="EcoCyc:DIHYDROOROTOX-MONOMER"/>
<dbReference type="BioCyc" id="MetaCyc:DIHYDROOROTOX-MONOMER"/>
<dbReference type="BRENDA" id="1.3.5.2">
    <property type="organism ID" value="2026"/>
</dbReference>
<dbReference type="SABIO-RK" id="P0A7E1"/>
<dbReference type="UniPathway" id="UPA00070">
    <property type="reaction ID" value="UER00946"/>
</dbReference>
<dbReference type="EvolutionaryTrace" id="P0A7E1"/>
<dbReference type="PRO" id="PR:P0A7E1"/>
<dbReference type="Proteomes" id="UP000000625">
    <property type="component" value="Chromosome"/>
</dbReference>
<dbReference type="GO" id="GO:0005829">
    <property type="term" value="C:cytosol"/>
    <property type="evidence" value="ECO:0000314"/>
    <property type="project" value="EcoCyc"/>
</dbReference>
<dbReference type="GO" id="GO:0016020">
    <property type="term" value="C:membrane"/>
    <property type="evidence" value="ECO:0000314"/>
    <property type="project" value="EcoCyc"/>
</dbReference>
<dbReference type="GO" id="GO:0005886">
    <property type="term" value="C:plasma membrane"/>
    <property type="evidence" value="ECO:0007669"/>
    <property type="project" value="UniProtKB-SubCell"/>
</dbReference>
<dbReference type="GO" id="GO:0106430">
    <property type="term" value="F:dihydroorotate dehydrogenase (quinone) activity"/>
    <property type="evidence" value="ECO:0007669"/>
    <property type="project" value="UniProtKB-EC"/>
</dbReference>
<dbReference type="GO" id="GO:0004152">
    <property type="term" value="F:dihydroorotate dehydrogenase activity"/>
    <property type="evidence" value="ECO:0000314"/>
    <property type="project" value="EcoCyc"/>
</dbReference>
<dbReference type="GO" id="GO:0010181">
    <property type="term" value="F:FMN binding"/>
    <property type="evidence" value="ECO:0000314"/>
    <property type="project" value="EcoCyc"/>
</dbReference>
<dbReference type="GO" id="GO:0006207">
    <property type="term" value="P:'de novo' pyrimidine nucleobase biosynthetic process"/>
    <property type="evidence" value="ECO:0000315"/>
    <property type="project" value="EcoCyc"/>
</dbReference>
<dbReference type="GO" id="GO:0044205">
    <property type="term" value="P:'de novo' UMP biosynthetic process"/>
    <property type="evidence" value="ECO:0007669"/>
    <property type="project" value="UniProtKB-UniRule"/>
</dbReference>
<dbReference type="GO" id="GO:0009220">
    <property type="term" value="P:pyrimidine ribonucleotide biosynthetic process"/>
    <property type="evidence" value="ECO:0000318"/>
    <property type="project" value="GO_Central"/>
</dbReference>
<dbReference type="CDD" id="cd04738">
    <property type="entry name" value="DHOD_2_like"/>
    <property type="match status" value="1"/>
</dbReference>
<dbReference type="FunFam" id="3.20.20.70:FF:000028">
    <property type="entry name" value="Dihydroorotate dehydrogenase (quinone)"/>
    <property type="match status" value="1"/>
</dbReference>
<dbReference type="Gene3D" id="3.20.20.70">
    <property type="entry name" value="Aldolase class I"/>
    <property type="match status" value="1"/>
</dbReference>
<dbReference type="HAMAP" id="MF_00225">
    <property type="entry name" value="DHO_dh_type2"/>
    <property type="match status" value="1"/>
</dbReference>
<dbReference type="InterPro" id="IPR013785">
    <property type="entry name" value="Aldolase_TIM"/>
</dbReference>
<dbReference type="InterPro" id="IPR050074">
    <property type="entry name" value="DHO_dehydrogenase"/>
</dbReference>
<dbReference type="InterPro" id="IPR012135">
    <property type="entry name" value="Dihydroorotate_DH_1_2"/>
</dbReference>
<dbReference type="InterPro" id="IPR005719">
    <property type="entry name" value="Dihydroorotate_DH_2"/>
</dbReference>
<dbReference type="InterPro" id="IPR005720">
    <property type="entry name" value="Dihydroorotate_DH_cat"/>
</dbReference>
<dbReference type="InterPro" id="IPR001295">
    <property type="entry name" value="Dihydroorotate_DH_CS"/>
</dbReference>
<dbReference type="NCBIfam" id="NF003644">
    <property type="entry name" value="PRK05286.1-1"/>
    <property type="match status" value="1"/>
</dbReference>
<dbReference type="NCBIfam" id="NF003645">
    <property type="entry name" value="PRK05286.1-2"/>
    <property type="match status" value="1"/>
</dbReference>
<dbReference type="NCBIfam" id="NF003646">
    <property type="entry name" value="PRK05286.1-4"/>
    <property type="match status" value="1"/>
</dbReference>
<dbReference type="NCBIfam" id="NF003652">
    <property type="entry name" value="PRK05286.2-5"/>
    <property type="match status" value="1"/>
</dbReference>
<dbReference type="NCBIfam" id="TIGR01036">
    <property type="entry name" value="pyrD_sub2"/>
    <property type="match status" value="1"/>
</dbReference>
<dbReference type="PANTHER" id="PTHR48109:SF4">
    <property type="entry name" value="DIHYDROOROTATE DEHYDROGENASE (QUINONE), MITOCHONDRIAL"/>
    <property type="match status" value="1"/>
</dbReference>
<dbReference type="PANTHER" id="PTHR48109">
    <property type="entry name" value="DIHYDROOROTATE DEHYDROGENASE (QUINONE), MITOCHONDRIAL-RELATED"/>
    <property type="match status" value="1"/>
</dbReference>
<dbReference type="Pfam" id="PF01180">
    <property type="entry name" value="DHO_dh"/>
    <property type="match status" value="1"/>
</dbReference>
<dbReference type="PIRSF" id="PIRSF000164">
    <property type="entry name" value="DHO_oxidase"/>
    <property type="match status" value="1"/>
</dbReference>
<dbReference type="SUPFAM" id="SSF51395">
    <property type="entry name" value="FMN-linked oxidoreductases"/>
    <property type="match status" value="1"/>
</dbReference>
<dbReference type="PROSITE" id="PS00911">
    <property type="entry name" value="DHODEHASE_1"/>
    <property type="match status" value="1"/>
</dbReference>
<dbReference type="PROSITE" id="PS00912">
    <property type="entry name" value="DHODEHASE_2"/>
    <property type="match status" value="1"/>
</dbReference>
<accession>P0A7E1</accession>
<accession>P05021</accession>
<comment type="function">
    <text evidence="1">Catalyzes the conversion of dihydroorotate to orotate with quinone as electron acceptor.</text>
</comment>
<comment type="catalytic activity">
    <reaction evidence="1">
        <text>(S)-dihydroorotate + a quinone = orotate + a quinol</text>
        <dbReference type="Rhea" id="RHEA:30187"/>
        <dbReference type="ChEBI" id="CHEBI:24646"/>
        <dbReference type="ChEBI" id="CHEBI:30839"/>
        <dbReference type="ChEBI" id="CHEBI:30864"/>
        <dbReference type="ChEBI" id="CHEBI:132124"/>
        <dbReference type="EC" id="1.3.5.2"/>
    </reaction>
</comment>
<comment type="cofactor">
    <cofactor evidence="2">
        <name>FMN</name>
        <dbReference type="ChEBI" id="CHEBI:58210"/>
    </cofactor>
    <text evidence="2">Binds 1 FMN per subunit.</text>
</comment>
<comment type="biophysicochemical properties">
    <kinetics>
        <KM evidence="1">28.8 uM for dihydroorotate</KM>
        <Vmax evidence="1">180.0 umol/min/mg enzyme</Vmax>
    </kinetics>
</comment>
<comment type="pathway">
    <text>Pyrimidine metabolism; UMP biosynthesis via de novo pathway; orotate from (S)-dihydroorotate (quinone route): step 1/1.</text>
</comment>
<comment type="subunit">
    <text evidence="2">Monomer.</text>
</comment>
<comment type="subcellular location">
    <subcellularLocation>
        <location>Cell membrane</location>
        <topology>Peripheral membrane protein</topology>
    </subcellularLocation>
</comment>
<comment type="similarity">
    <text evidence="3">Belongs to the dihydroorotate dehydrogenase family. Type 2 subfamily.</text>
</comment>
<feature type="chain" id="PRO_0000148437" description="Dihydroorotate dehydrogenase (quinone)">
    <location>
        <begin position="1"/>
        <end position="336"/>
    </location>
</feature>
<feature type="active site" description="Nucleophile">
    <location>
        <position position="175"/>
    </location>
</feature>
<feature type="binding site" evidence="2">
    <location>
        <begin position="62"/>
        <end position="66"/>
    </location>
    <ligand>
        <name>FMN</name>
        <dbReference type="ChEBI" id="CHEBI:58210"/>
    </ligand>
</feature>
<feature type="binding site">
    <location>
        <position position="66"/>
    </location>
    <ligand>
        <name>substrate</name>
    </ligand>
</feature>
<feature type="binding site" evidence="2">
    <location>
        <position position="86"/>
    </location>
    <ligand>
        <name>FMN</name>
        <dbReference type="ChEBI" id="CHEBI:58210"/>
    </ligand>
</feature>
<feature type="binding site">
    <location>
        <begin position="111"/>
        <end position="115"/>
    </location>
    <ligand>
        <name>substrate</name>
    </ligand>
</feature>
<feature type="binding site" evidence="2">
    <location>
        <position position="139"/>
    </location>
    <ligand>
        <name>FMN</name>
        <dbReference type="ChEBI" id="CHEBI:58210"/>
    </ligand>
</feature>
<feature type="binding site" evidence="2">
    <location>
        <position position="172"/>
    </location>
    <ligand>
        <name>FMN</name>
        <dbReference type="ChEBI" id="CHEBI:58210"/>
    </ligand>
</feature>
<feature type="binding site">
    <location>
        <position position="172"/>
    </location>
    <ligand>
        <name>substrate</name>
    </ligand>
</feature>
<feature type="binding site">
    <location>
        <position position="177"/>
    </location>
    <ligand>
        <name>substrate</name>
    </ligand>
</feature>
<feature type="binding site" evidence="2">
    <location>
        <position position="217"/>
    </location>
    <ligand>
        <name>FMN</name>
        <dbReference type="ChEBI" id="CHEBI:58210"/>
    </ligand>
</feature>
<feature type="binding site" evidence="2">
    <location>
        <position position="245"/>
    </location>
    <ligand>
        <name>FMN</name>
        <dbReference type="ChEBI" id="CHEBI:58210"/>
    </ligand>
</feature>
<feature type="binding site">
    <location>
        <begin position="246"/>
        <end position="247"/>
    </location>
    <ligand>
        <name>substrate</name>
    </ligand>
</feature>
<feature type="binding site" evidence="2">
    <location>
        <position position="268"/>
    </location>
    <ligand>
        <name>FMN</name>
        <dbReference type="ChEBI" id="CHEBI:58210"/>
    </ligand>
</feature>
<feature type="binding site" evidence="2">
    <location>
        <position position="297"/>
    </location>
    <ligand>
        <name>FMN</name>
        <dbReference type="ChEBI" id="CHEBI:58210"/>
    </ligand>
</feature>
<feature type="binding site" evidence="2">
    <location>
        <begin position="318"/>
        <end position="319"/>
    </location>
    <ligand>
        <name>FMN</name>
        <dbReference type="ChEBI" id="CHEBI:58210"/>
    </ligand>
</feature>
<feature type="mutagenesis site" description="Almost no activity." evidence="1">
    <original>S</original>
    <variation>A</variation>
    <location>
        <position position="175"/>
    </location>
</feature>
<feature type="mutagenesis site" description="500-fold reduction in activity." evidence="1">
    <original>S</original>
    <variation>C</variation>
    <location>
        <position position="175"/>
    </location>
</feature>
<feature type="helix" evidence="5">
    <location>
        <begin position="3"/>
        <end position="10"/>
    </location>
</feature>
<feature type="helix" evidence="5">
    <location>
        <begin position="15"/>
        <end position="29"/>
    </location>
</feature>
<feature type="helix" evidence="5">
    <location>
        <begin position="33"/>
        <end position="37"/>
    </location>
</feature>
<feature type="strand" evidence="5">
    <location>
        <begin position="47"/>
        <end position="49"/>
    </location>
</feature>
<feature type="strand" evidence="5">
    <location>
        <begin position="52"/>
        <end position="60"/>
    </location>
</feature>
<feature type="strand" evidence="7">
    <location>
        <begin position="64"/>
        <end position="67"/>
    </location>
</feature>
<feature type="helix" evidence="5">
    <location>
        <begin position="71"/>
        <end position="75"/>
    </location>
</feature>
<feature type="turn" evidence="5">
    <location>
        <begin position="76"/>
        <end position="78"/>
    </location>
</feature>
<feature type="strand" evidence="5">
    <location>
        <begin position="80"/>
        <end position="87"/>
    </location>
</feature>
<feature type="strand" evidence="5">
    <location>
        <begin position="100"/>
        <end position="103"/>
    </location>
</feature>
<feature type="turn" evidence="5">
    <location>
        <begin position="104"/>
        <end position="107"/>
    </location>
</feature>
<feature type="strand" evidence="5">
    <location>
        <begin position="108"/>
        <end position="111"/>
    </location>
</feature>
<feature type="helix" evidence="5">
    <location>
        <begin position="120"/>
        <end position="128"/>
    </location>
</feature>
<feature type="strand" evidence="5">
    <location>
        <begin position="134"/>
        <end position="140"/>
    </location>
</feature>
<feature type="strand" evidence="5">
    <location>
        <begin position="144"/>
        <end position="146"/>
    </location>
</feature>
<feature type="helix" evidence="5">
    <location>
        <begin position="148"/>
        <end position="150"/>
    </location>
</feature>
<feature type="helix" evidence="5">
    <location>
        <begin position="151"/>
        <end position="162"/>
    </location>
</feature>
<feature type="turn" evidence="5">
    <location>
        <begin position="163"/>
        <end position="165"/>
    </location>
</feature>
<feature type="strand" evidence="5">
    <location>
        <begin position="167"/>
        <end position="172"/>
    </location>
</feature>
<feature type="strand" evidence="4">
    <location>
        <begin position="176"/>
        <end position="178"/>
    </location>
</feature>
<feature type="helix" evidence="5">
    <location>
        <begin position="181"/>
        <end position="185"/>
    </location>
</feature>
<feature type="helix" evidence="5">
    <location>
        <begin position="187"/>
        <end position="208"/>
    </location>
</feature>
<feature type="strand" evidence="5">
    <location>
        <begin position="214"/>
        <end position="217"/>
    </location>
</feature>
<feature type="helix" evidence="5">
    <location>
        <begin position="224"/>
        <end position="236"/>
    </location>
</feature>
<feature type="strand" evidence="5">
    <location>
        <begin position="240"/>
        <end position="244"/>
    </location>
</feature>
<feature type="turn" evidence="6">
    <location>
        <begin position="252"/>
        <end position="256"/>
    </location>
</feature>
<feature type="turn" evidence="5">
    <location>
        <begin position="258"/>
        <end position="261"/>
    </location>
</feature>
<feature type="strand" evidence="5">
    <location>
        <begin position="263"/>
        <end position="268"/>
    </location>
</feature>
<feature type="helix" evidence="5">
    <location>
        <begin position="269"/>
        <end position="271"/>
    </location>
</feature>
<feature type="helix" evidence="5">
    <location>
        <begin position="272"/>
        <end position="286"/>
    </location>
</feature>
<feature type="strand" evidence="5">
    <location>
        <begin position="292"/>
        <end position="297"/>
    </location>
</feature>
<feature type="helix" evidence="5">
    <location>
        <begin position="301"/>
        <end position="310"/>
    </location>
</feature>
<feature type="strand" evidence="5">
    <location>
        <begin position="313"/>
        <end position="318"/>
    </location>
</feature>
<feature type="helix" evidence="5">
    <location>
        <begin position="319"/>
        <end position="324"/>
    </location>
</feature>
<feature type="helix" evidence="5">
    <location>
        <begin position="326"/>
        <end position="335"/>
    </location>
</feature>
<evidence type="ECO:0000269" key="1">
    <source>
    </source>
</evidence>
<evidence type="ECO:0000269" key="2">
    <source>
    </source>
</evidence>
<evidence type="ECO:0000305" key="3"/>
<evidence type="ECO:0007829" key="4">
    <source>
        <dbReference type="PDB" id="1F76"/>
    </source>
</evidence>
<evidence type="ECO:0007829" key="5">
    <source>
        <dbReference type="PDB" id="7T5K"/>
    </source>
</evidence>
<evidence type="ECO:0007829" key="6">
    <source>
        <dbReference type="PDB" id="7T5Y"/>
    </source>
</evidence>
<evidence type="ECO:0007829" key="7">
    <source>
        <dbReference type="PDB" id="7T6C"/>
    </source>
</evidence>
<gene>
    <name type="primary">pyrD</name>
    <name type="ordered locus">b0945</name>
    <name type="ordered locus">JW0928</name>
</gene>
<name>PYRD_ECOLI</name>
<protein>
    <recommendedName>
        <fullName>Dihydroorotate dehydrogenase (quinone)</fullName>
        <ecNumber>1.3.5.2</ecNumber>
    </recommendedName>
    <alternativeName>
        <fullName>DHOdehase</fullName>
        <shortName>DHOD</shortName>
        <shortName>DHODase</shortName>
    </alternativeName>
    <alternativeName>
        <fullName>Dihydroorotate oxidase</fullName>
    </alternativeName>
</protein>
<sequence>MYYPFVRKALFQLDPERAHEFTFQQLRRITGTPFEALVRQKVPAKPVNCMGLTFKNPLGLAAGLDKDGECIDALGAMGFGSIEIGTVTPRPQPGNDKPRLFRLVDAEGLINRMGFNNLGVDNLVENVKKAHYDGVLGINIGKNKDTPVEQGKDDYLICMEKIYAYAGYIAINISSPNTPGLRTLQYGEALDDLLTAIKNKQNDLQAMHHKYVPIAVKIAPDLSEEELIQVADSLVRHNIDGVIATNTTLDRSLVQGMKNCDQTGGLSGRPLQLKSTEIIRRLSLELNGRLPIIGVGGIDSVIAAREKIAAGASLVQIYSGFIFKGPPLIKEIVTHI</sequence>
<organism>
    <name type="scientific">Escherichia coli (strain K12)</name>
    <dbReference type="NCBI Taxonomy" id="83333"/>
    <lineage>
        <taxon>Bacteria</taxon>
        <taxon>Pseudomonadati</taxon>
        <taxon>Pseudomonadota</taxon>
        <taxon>Gammaproteobacteria</taxon>
        <taxon>Enterobacterales</taxon>
        <taxon>Enterobacteriaceae</taxon>
        <taxon>Escherichia</taxon>
    </lineage>
</organism>
<proteinExistence type="evidence at protein level"/>
<reference key="1">
    <citation type="journal article" date="1985" name="Eur. J. Biochem.">
        <title>Nucleotide sequence of the pyrD gene of Escherichia coli and characterization of the flavoprotein dihydroorotate dehydrogenase.</title>
        <authorList>
            <person name="Larsen N.J."/>
            <person name="Jensen K.F."/>
        </authorList>
    </citation>
    <scope>NUCLEOTIDE SEQUENCE [GENOMIC DNA]</scope>
    <scope>PROTEIN SEQUENCE OF 1-7</scope>
</reference>
<reference key="2">
    <citation type="journal article" date="1996" name="DNA Res.">
        <title>A 718-kb DNA sequence of the Escherichia coli K-12 genome corresponding to the 12.7-28.0 min region on the linkage map.</title>
        <authorList>
            <person name="Oshima T."/>
            <person name="Aiba H."/>
            <person name="Baba T."/>
            <person name="Fujita K."/>
            <person name="Hayashi K."/>
            <person name="Honjo A."/>
            <person name="Ikemoto K."/>
            <person name="Inada T."/>
            <person name="Itoh T."/>
            <person name="Kajihara M."/>
            <person name="Kanai K."/>
            <person name="Kashimoto K."/>
            <person name="Kimura S."/>
            <person name="Kitagawa M."/>
            <person name="Makino K."/>
            <person name="Masuda S."/>
            <person name="Miki T."/>
            <person name="Mizobuchi K."/>
            <person name="Mori H."/>
            <person name="Motomura K."/>
            <person name="Nakamura Y."/>
            <person name="Nashimoto H."/>
            <person name="Nishio Y."/>
            <person name="Saito N."/>
            <person name="Sampei G."/>
            <person name="Seki Y."/>
            <person name="Tagami H."/>
            <person name="Takemoto K."/>
            <person name="Wada C."/>
            <person name="Yamamoto Y."/>
            <person name="Yano M."/>
            <person name="Horiuchi T."/>
        </authorList>
    </citation>
    <scope>NUCLEOTIDE SEQUENCE [LARGE SCALE GENOMIC DNA]</scope>
    <source>
        <strain>K12 / W3110 / ATCC 27325 / DSM 5911</strain>
    </source>
</reference>
<reference key="3">
    <citation type="journal article" date="1997" name="Science">
        <title>The complete genome sequence of Escherichia coli K-12.</title>
        <authorList>
            <person name="Blattner F.R."/>
            <person name="Plunkett G. III"/>
            <person name="Bloch C.A."/>
            <person name="Perna N.T."/>
            <person name="Burland V."/>
            <person name="Riley M."/>
            <person name="Collado-Vides J."/>
            <person name="Glasner J.D."/>
            <person name="Rode C.K."/>
            <person name="Mayhew G.F."/>
            <person name="Gregor J."/>
            <person name="Davis N.W."/>
            <person name="Kirkpatrick H.A."/>
            <person name="Goeden M.A."/>
            <person name="Rose D.J."/>
            <person name="Mau B."/>
            <person name="Shao Y."/>
        </authorList>
    </citation>
    <scope>NUCLEOTIDE SEQUENCE [LARGE SCALE GENOMIC DNA]</scope>
    <source>
        <strain>K12 / MG1655 / ATCC 47076</strain>
    </source>
</reference>
<reference key="4">
    <citation type="journal article" date="2006" name="Mol. Syst. Biol.">
        <title>Highly accurate genome sequences of Escherichia coli K-12 strains MG1655 and W3110.</title>
        <authorList>
            <person name="Hayashi K."/>
            <person name="Morooka N."/>
            <person name="Yamamoto Y."/>
            <person name="Fujita K."/>
            <person name="Isono K."/>
            <person name="Choi S."/>
            <person name="Ohtsubo E."/>
            <person name="Baba T."/>
            <person name="Wanner B.L."/>
            <person name="Mori H."/>
            <person name="Horiuchi T."/>
        </authorList>
    </citation>
    <scope>NUCLEOTIDE SEQUENCE [LARGE SCALE GENOMIC DNA]</scope>
    <source>
        <strain>K12 / W3110 / ATCC 27325 / DSM 5911</strain>
    </source>
</reference>
<reference key="5">
    <citation type="journal article" date="1999" name="Biochemistry">
        <title>The activity of Escherichia coli dihydroorotate dehydrogenase is dependent on a conserved loop identified by sequence homology, mutagenesis, and limited proteolysis.</title>
        <authorList>
            <person name="Bjoernberg O."/>
            <person name="Gruener A.-C."/>
            <person name="Roepstorff P."/>
            <person name="Jensen K.F."/>
        </authorList>
    </citation>
    <scope>PROTEIN SEQUENCE OF 1-10 AND 183-192</scope>
    <scope>FUNCTION</scope>
    <scope>CATALYTIC ACTIVITY</scope>
    <scope>BIOPHYSICOCHEMICAL PROPERTIES</scope>
    <scope>MUTAGENESIS OF SER-175</scope>
    <scope>ENZYME KINETICS</scope>
</reference>
<reference key="6">
    <citation type="journal article" date="2002" name="Structure">
        <title>E. coli dihydroorotate dehydrogenase reveals structural and functional distinctions between different classes of dihydroorotate dehydrogenases.</title>
        <authorList>
            <person name="Noerager S."/>
            <person name="Jensen K.F."/>
            <person name="Bjoernberg O."/>
            <person name="Larsen S."/>
        </authorList>
    </citation>
    <scope>X-RAY CRYSTALLOGRAPHY (2.5 ANGSTROMS) IN COMPLEX WITH FMN AND OROTATE</scope>
    <scope>COFACTOR</scope>
    <scope>SUBUNIT</scope>
    <scope>REACTION MECHANISM</scope>
</reference>
<keyword id="KW-0002">3D-structure</keyword>
<keyword id="KW-1003">Cell membrane</keyword>
<keyword id="KW-0903">Direct protein sequencing</keyword>
<keyword id="KW-0285">Flavoprotein</keyword>
<keyword id="KW-0288">FMN</keyword>
<keyword id="KW-0472">Membrane</keyword>
<keyword id="KW-0560">Oxidoreductase</keyword>
<keyword id="KW-0665">Pyrimidine biosynthesis</keyword>
<keyword id="KW-1185">Reference proteome</keyword>